<feature type="chain" id="PRO_0000270401" description="Methionine import ATP-binding protein MetN 1">
    <location>
        <begin position="1"/>
        <end position="341"/>
    </location>
</feature>
<feature type="domain" description="ABC transporter" evidence="1">
    <location>
        <begin position="2"/>
        <end position="241"/>
    </location>
</feature>
<feature type="binding site" evidence="1">
    <location>
        <begin position="38"/>
        <end position="45"/>
    </location>
    <ligand>
        <name>ATP</name>
        <dbReference type="ChEBI" id="CHEBI:30616"/>
    </ligand>
</feature>
<name>METN1_STAA8</name>
<sequence length="341" mass="38676">MIEFRQVSKTFNKKKQKIDALKDVSFTVNRNDIFGVIGYSGAGKSTLVRLVNHLEAASNGQVIVDGHDITNYSDKMMRDIKKDIGMIFQHFNLLNSATVFKNVAMPLILSKKSKTEIKQRVTEMLEFVGLSDKKDQFPDELSGGQKQRVAIARALVTNPKILLCDEATSALDPATTASILTLLKNVNQTFGITIMMITHEMRVIKDICNRVAVMEKGKVVETGTVKEVFSHPKTTIAQNFVSTVIQTEPSTSLIRRLNDEQVGDFKDYKIFVEETQVTQPIINDLIQICGREVKILFSSMSEIQGNTVCYMWLRFNMDQQFEDTAINQYFKEKNIQFEEVH</sequence>
<comment type="function">
    <text evidence="1">Part of the ABC transporter complex MetNIQ involved in methionine import. Responsible for energy coupling to the transport system.</text>
</comment>
<comment type="catalytic activity">
    <reaction evidence="1">
        <text>L-methionine(out) + ATP + H2O = L-methionine(in) + ADP + phosphate + H(+)</text>
        <dbReference type="Rhea" id="RHEA:29779"/>
        <dbReference type="ChEBI" id="CHEBI:15377"/>
        <dbReference type="ChEBI" id="CHEBI:15378"/>
        <dbReference type="ChEBI" id="CHEBI:30616"/>
        <dbReference type="ChEBI" id="CHEBI:43474"/>
        <dbReference type="ChEBI" id="CHEBI:57844"/>
        <dbReference type="ChEBI" id="CHEBI:456216"/>
        <dbReference type="EC" id="7.4.2.11"/>
    </reaction>
</comment>
<comment type="catalytic activity">
    <reaction evidence="1">
        <text>D-methionine(out) + ATP + H2O = D-methionine(in) + ADP + phosphate + H(+)</text>
        <dbReference type="Rhea" id="RHEA:29767"/>
        <dbReference type="ChEBI" id="CHEBI:15377"/>
        <dbReference type="ChEBI" id="CHEBI:15378"/>
        <dbReference type="ChEBI" id="CHEBI:30616"/>
        <dbReference type="ChEBI" id="CHEBI:43474"/>
        <dbReference type="ChEBI" id="CHEBI:57932"/>
        <dbReference type="ChEBI" id="CHEBI:456216"/>
        <dbReference type="EC" id="7.4.2.11"/>
    </reaction>
</comment>
<comment type="subunit">
    <text evidence="1">The complex is composed of two ATP-binding proteins (MetN), two transmembrane proteins (MetI) and a solute-binding protein (MetQ).</text>
</comment>
<comment type="subcellular location">
    <subcellularLocation>
        <location evidence="1">Cell membrane</location>
        <topology evidence="1">Peripheral membrane protein</topology>
    </subcellularLocation>
</comment>
<comment type="similarity">
    <text evidence="1">Belongs to the ABC transporter superfamily. Methionine importer (TC 3.A.1.24) family.</text>
</comment>
<proteinExistence type="inferred from homology"/>
<gene>
    <name evidence="1" type="primary">metN1</name>
    <name type="ordered locus">SAOUHSC_00423</name>
</gene>
<dbReference type="EC" id="7.4.2.11" evidence="1"/>
<dbReference type="EMBL" id="CP000253">
    <property type="protein sequence ID" value="ABD29584.1"/>
    <property type="molecule type" value="Genomic_DNA"/>
</dbReference>
<dbReference type="RefSeq" id="WP_000569286.1">
    <property type="nucleotide sequence ID" value="NZ_LS483365.1"/>
</dbReference>
<dbReference type="RefSeq" id="YP_499008.1">
    <property type="nucleotide sequence ID" value="NC_007795.1"/>
</dbReference>
<dbReference type="SMR" id="Q2G0V2"/>
<dbReference type="STRING" id="93061.SAOUHSC_00423"/>
<dbReference type="PaxDb" id="1280-SAXN108_0512"/>
<dbReference type="GeneID" id="3919097"/>
<dbReference type="KEGG" id="sao:SAOUHSC_00423"/>
<dbReference type="PATRIC" id="fig|93061.5.peg.388"/>
<dbReference type="eggNOG" id="COG1135">
    <property type="taxonomic scope" value="Bacteria"/>
</dbReference>
<dbReference type="HOGENOM" id="CLU_000604_1_3_9"/>
<dbReference type="OrthoDB" id="9802264at2"/>
<dbReference type="PRO" id="PR:Q2G0V2"/>
<dbReference type="Proteomes" id="UP000008816">
    <property type="component" value="Chromosome"/>
</dbReference>
<dbReference type="GO" id="GO:0005886">
    <property type="term" value="C:plasma membrane"/>
    <property type="evidence" value="ECO:0007669"/>
    <property type="project" value="UniProtKB-SubCell"/>
</dbReference>
<dbReference type="GO" id="GO:0033232">
    <property type="term" value="F:ABC-type D-methionine transporter activity"/>
    <property type="evidence" value="ECO:0007669"/>
    <property type="project" value="UniProtKB-EC"/>
</dbReference>
<dbReference type="GO" id="GO:0005524">
    <property type="term" value="F:ATP binding"/>
    <property type="evidence" value="ECO:0007669"/>
    <property type="project" value="UniProtKB-KW"/>
</dbReference>
<dbReference type="GO" id="GO:0016887">
    <property type="term" value="F:ATP hydrolysis activity"/>
    <property type="evidence" value="ECO:0007669"/>
    <property type="project" value="InterPro"/>
</dbReference>
<dbReference type="CDD" id="cd03258">
    <property type="entry name" value="ABC_MetN_methionine_transporter"/>
    <property type="match status" value="1"/>
</dbReference>
<dbReference type="FunFam" id="3.40.50.300:FF:000056">
    <property type="entry name" value="Cell division ATP-binding protein FtsE"/>
    <property type="match status" value="1"/>
</dbReference>
<dbReference type="Gene3D" id="3.30.70.260">
    <property type="match status" value="1"/>
</dbReference>
<dbReference type="Gene3D" id="3.40.50.300">
    <property type="entry name" value="P-loop containing nucleotide triphosphate hydrolases"/>
    <property type="match status" value="1"/>
</dbReference>
<dbReference type="InterPro" id="IPR003593">
    <property type="entry name" value="AAA+_ATPase"/>
</dbReference>
<dbReference type="InterPro" id="IPR003439">
    <property type="entry name" value="ABC_transporter-like_ATP-bd"/>
</dbReference>
<dbReference type="InterPro" id="IPR017871">
    <property type="entry name" value="ABC_transporter-like_CS"/>
</dbReference>
<dbReference type="InterPro" id="IPR045865">
    <property type="entry name" value="ACT-like_dom_sf"/>
</dbReference>
<dbReference type="InterPro" id="IPR041701">
    <property type="entry name" value="MetN_ABC"/>
</dbReference>
<dbReference type="InterPro" id="IPR050086">
    <property type="entry name" value="MetN_ABC_transporter-like"/>
</dbReference>
<dbReference type="InterPro" id="IPR018449">
    <property type="entry name" value="NIL_domain"/>
</dbReference>
<dbReference type="InterPro" id="IPR027417">
    <property type="entry name" value="P-loop_NTPase"/>
</dbReference>
<dbReference type="PANTHER" id="PTHR43166">
    <property type="entry name" value="AMINO ACID IMPORT ATP-BINDING PROTEIN"/>
    <property type="match status" value="1"/>
</dbReference>
<dbReference type="PANTHER" id="PTHR43166:SF30">
    <property type="entry name" value="METHIONINE IMPORT ATP-BINDING PROTEIN METN"/>
    <property type="match status" value="1"/>
</dbReference>
<dbReference type="Pfam" id="PF00005">
    <property type="entry name" value="ABC_tran"/>
    <property type="match status" value="1"/>
</dbReference>
<dbReference type="Pfam" id="PF09383">
    <property type="entry name" value="NIL"/>
    <property type="match status" value="1"/>
</dbReference>
<dbReference type="SMART" id="SM00382">
    <property type="entry name" value="AAA"/>
    <property type="match status" value="1"/>
</dbReference>
<dbReference type="SMART" id="SM00930">
    <property type="entry name" value="NIL"/>
    <property type="match status" value="1"/>
</dbReference>
<dbReference type="SUPFAM" id="SSF55021">
    <property type="entry name" value="ACT-like"/>
    <property type="match status" value="1"/>
</dbReference>
<dbReference type="SUPFAM" id="SSF52540">
    <property type="entry name" value="P-loop containing nucleoside triphosphate hydrolases"/>
    <property type="match status" value="1"/>
</dbReference>
<dbReference type="PROSITE" id="PS00211">
    <property type="entry name" value="ABC_TRANSPORTER_1"/>
    <property type="match status" value="1"/>
</dbReference>
<dbReference type="PROSITE" id="PS50893">
    <property type="entry name" value="ABC_TRANSPORTER_2"/>
    <property type="match status" value="1"/>
</dbReference>
<dbReference type="PROSITE" id="PS51264">
    <property type="entry name" value="METN"/>
    <property type="match status" value="1"/>
</dbReference>
<organism>
    <name type="scientific">Staphylococcus aureus (strain NCTC 8325 / PS 47)</name>
    <dbReference type="NCBI Taxonomy" id="93061"/>
    <lineage>
        <taxon>Bacteria</taxon>
        <taxon>Bacillati</taxon>
        <taxon>Bacillota</taxon>
        <taxon>Bacilli</taxon>
        <taxon>Bacillales</taxon>
        <taxon>Staphylococcaceae</taxon>
        <taxon>Staphylococcus</taxon>
    </lineage>
</organism>
<keyword id="KW-0029">Amino-acid transport</keyword>
<keyword id="KW-0067">ATP-binding</keyword>
<keyword id="KW-1003">Cell membrane</keyword>
<keyword id="KW-0472">Membrane</keyword>
<keyword id="KW-0547">Nucleotide-binding</keyword>
<keyword id="KW-1185">Reference proteome</keyword>
<keyword id="KW-1278">Translocase</keyword>
<keyword id="KW-0813">Transport</keyword>
<accession>Q2G0V2</accession>
<protein>
    <recommendedName>
        <fullName evidence="1">Methionine import ATP-binding protein MetN 1</fullName>
        <ecNumber evidence="1">7.4.2.11</ecNumber>
    </recommendedName>
</protein>
<evidence type="ECO:0000255" key="1">
    <source>
        <dbReference type="HAMAP-Rule" id="MF_01719"/>
    </source>
</evidence>
<reference key="1">
    <citation type="book" date="2006" name="Gram positive pathogens, 2nd edition">
        <title>The Staphylococcus aureus NCTC 8325 genome.</title>
        <editorList>
            <person name="Fischetti V."/>
            <person name="Novick R."/>
            <person name="Ferretti J."/>
            <person name="Portnoy D."/>
            <person name="Rood J."/>
        </editorList>
        <authorList>
            <person name="Gillaspy A.F."/>
            <person name="Worrell V."/>
            <person name="Orvis J."/>
            <person name="Roe B.A."/>
            <person name="Dyer D.W."/>
            <person name="Iandolo J.J."/>
        </authorList>
    </citation>
    <scope>NUCLEOTIDE SEQUENCE [LARGE SCALE GENOMIC DNA]</scope>
    <source>
        <strain>NCTC 8325 / PS 47</strain>
    </source>
</reference>